<gene>
    <name type="primary">LRX7</name>
    <name type="ordered locus">At5g25550</name>
    <name type="ORF">T14C9.90</name>
</gene>
<accession>Q4PSE6</accession>
<proteinExistence type="evidence at transcript level"/>
<reference key="1">
    <citation type="journal article" date="2000" name="Nature">
        <title>Sequence and analysis of chromosome 5 of the plant Arabidopsis thaliana.</title>
        <authorList>
            <person name="Tabata S."/>
            <person name="Kaneko T."/>
            <person name="Nakamura Y."/>
            <person name="Kotani H."/>
            <person name="Kato T."/>
            <person name="Asamizu E."/>
            <person name="Miyajima N."/>
            <person name="Sasamoto S."/>
            <person name="Kimura T."/>
            <person name="Hosouchi T."/>
            <person name="Kawashima K."/>
            <person name="Kohara M."/>
            <person name="Matsumoto M."/>
            <person name="Matsuno A."/>
            <person name="Muraki A."/>
            <person name="Nakayama S."/>
            <person name="Nakazaki N."/>
            <person name="Naruo K."/>
            <person name="Okumura S."/>
            <person name="Shinpo S."/>
            <person name="Takeuchi C."/>
            <person name="Wada T."/>
            <person name="Watanabe A."/>
            <person name="Yamada M."/>
            <person name="Yasuda M."/>
            <person name="Sato S."/>
            <person name="de la Bastide M."/>
            <person name="Huang E."/>
            <person name="Spiegel L."/>
            <person name="Gnoj L."/>
            <person name="O'Shaughnessy A."/>
            <person name="Preston R."/>
            <person name="Habermann K."/>
            <person name="Murray J."/>
            <person name="Johnson D."/>
            <person name="Rohlfing T."/>
            <person name="Nelson J."/>
            <person name="Stoneking T."/>
            <person name="Pepin K."/>
            <person name="Spieth J."/>
            <person name="Sekhon M."/>
            <person name="Armstrong J."/>
            <person name="Becker M."/>
            <person name="Belter E."/>
            <person name="Cordum H."/>
            <person name="Cordes M."/>
            <person name="Courtney L."/>
            <person name="Courtney W."/>
            <person name="Dante M."/>
            <person name="Du H."/>
            <person name="Edwards J."/>
            <person name="Fryman J."/>
            <person name="Haakensen B."/>
            <person name="Lamar E."/>
            <person name="Latreille P."/>
            <person name="Leonard S."/>
            <person name="Meyer R."/>
            <person name="Mulvaney E."/>
            <person name="Ozersky P."/>
            <person name="Riley A."/>
            <person name="Strowmatt C."/>
            <person name="Wagner-McPherson C."/>
            <person name="Wollam A."/>
            <person name="Yoakum M."/>
            <person name="Bell M."/>
            <person name="Dedhia N."/>
            <person name="Parnell L."/>
            <person name="Shah R."/>
            <person name="Rodriguez M."/>
            <person name="Hoon See L."/>
            <person name="Vil D."/>
            <person name="Baker J."/>
            <person name="Kirchoff K."/>
            <person name="Toth K."/>
            <person name="King L."/>
            <person name="Bahret A."/>
            <person name="Miller B."/>
            <person name="Marra M.A."/>
            <person name="Martienssen R."/>
            <person name="McCombie W.R."/>
            <person name="Wilson R.K."/>
            <person name="Murphy G."/>
            <person name="Bancroft I."/>
            <person name="Volckaert G."/>
            <person name="Wambutt R."/>
            <person name="Duesterhoeft A."/>
            <person name="Stiekema W."/>
            <person name="Pohl T."/>
            <person name="Entian K.-D."/>
            <person name="Terryn N."/>
            <person name="Hartley N."/>
            <person name="Bent E."/>
            <person name="Johnson S."/>
            <person name="Langham S.-A."/>
            <person name="McCullagh B."/>
            <person name="Robben J."/>
            <person name="Grymonprez B."/>
            <person name="Zimmermann W."/>
            <person name="Ramsperger U."/>
            <person name="Wedler H."/>
            <person name="Balke K."/>
            <person name="Wedler E."/>
            <person name="Peters S."/>
            <person name="van Staveren M."/>
            <person name="Dirkse W."/>
            <person name="Mooijman P."/>
            <person name="Klein Lankhorst R."/>
            <person name="Weitzenegger T."/>
            <person name="Bothe G."/>
            <person name="Rose M."/>
            <person name="Hauf J."/>
            <person name="Berneiser S."/>
            <person name="Hempel S."/>
            <person name="Feldpausch M."/>
            <person name="Lamberth S."/>
            <person name="Villarroel R."/>
            <person name="Gielen J."/>
            <person name="Ardiles W."/>
            <person name="Bents O."/>
            <person name="Lemcke K."/>
            <person name="Kolesov G."/>
            <person name="Mayer K.F.X."/>
            <person name="Rudd S."/>
            <person name="Schoof H."/>
            <person name="Schueller C."/>
            <person name="Zaccaria P."/>
            <person name="Mewes H.-W."/>
            <person name="Bevan M."/>
            <person name="Fransz P.F."/>
        </authorList>
    </citation>
    <scope>NUCLEOTIDE SEQUENCE [LARGE SCALE GENOMIC DNA]</scope>
    <source>
        <strain>cv. Columbia</strain>
    </source>
</reference>
<reference key="2">
    <citation type="journal article" date="2017" name="Plant J.">
        <title>Araport11: a complete reannotation of the Arabidopsis thaliana reference genome.</title>
        <authorList>
            <person name="Cheng C.Y."/>
            <person name="Krishnakumar V."/>
            <person name="Chan A.P."/>
            <person name="Thibaud-Nissen F."/>
            <person name="Schobel S."/>
            <person name="Town C.D."/>
        </authorList>
    </citation>
    <scope>GENOME REANNOTATION</scope>
    <source>
        <strain>cv. Columbia</strain>
    </source>
</reference>
<reference key="3">
    <citation type="submission" date="2005-05" db="EMBL/GenBank/DDBJ databases">
        <authorList>
            <person name="Underwood B.A."/>
            <person name="Xiao Y.-L."/>
            <person name="Moskal W.A. Jr."/>
            <person name="Monaghan E.L."/>
            <person name="Wang W."/>
            <person name="Redman J.C."/>
            <person name="Wu H.C."/>
            <person name="Utterback T."/>
            <person name="Town C.D."/>
        </authorList>
    </citation>
    <scope>NUCLEOTIDE SEQUENCE [LARGE SCALE MRNA]</scope>
    <source>
        <strain>cv. Columbia</strain>
    </source>
</reference>
<reference key="4">
    <citation type="journal article" date="2003" name="Plant Physiol.">
        <title>Whole-genome comparison of leucine-rich repeat extensins in Arabidopsis and rice. A conserved family of cell wall proteins form a vegetative and a reproductive clade.</title>
        <authorList>
            <person name="Baumberger N."/>
            <person name="Doesseger B."/>
            <person name="Guyot R."/>
            <person name="Diet A."/>
            <person name="Parsons R.L."/>
            <person name="Clark M.A."/>
            <person name="Simmons M.P."/>
            <person name="Bedinger P."/>
            <person name="Goff S.A."/>
            <person name="Ringli C."/>
            <person name="Keller B."/>
        </authorList>
    </citation>
    <scope>TISSUE SPECIFICITY</scope>
    <scope>GENE FAMILY</scope>
    <scope>NOMENCLATURE</scope>
</reference>
<keyword id="KW-0134">Cell wall</keyword>
<keyword id="KW-0961">Cell wall biogenesis/degradation</keyword>
<keyword id="KW-0325">Glycoprotein</keyword>
<keyword id="KW-0379">Hydroxylation</keyword>
<keyword id="KW-0433">Leucine-rich repeat</keyword>
<keyword id="KW-1185">Reference proteome</keyword>
<keyword id="KW-0677">Repeat</keyword>
<keyword id="KW-0964">Secreted</keyword>
<keyword id="KW-0732">Signal</keyword>
<organism>
    <name type="scientific">Arabidopsis thaliana</name>
    <name type="common">Mouse-ear cress</name>
    <dbReference type="NCBI Taxonomy" id="3702"/>
    <lineage>
        <taxon>Eukaryota</taxon>
        <taxon>Viridiplantae</taxon>
        <taxon>Streptophyta</taxon>
        <taxon>Embryophyta</taxon>
        <taxon>Tracheophyta</taxon>
        <taxon>Spermatophyta</taxon>
        <taxon>Magnoliopsida</taxon>
        <taxon>eudicotyledons</taxon>
        <taxon>Gunneridae</taxon>
        <taxon>Pentapetalae</taxon>
        <taxon>rosids</taxon>
        <taxon>malvids</taxon>
        <taxon>Brassicales</taxon>
        <taxon>Brassicaceae</taxon>
        <taxon>Camelineae</taxon>
        <taxon>Arabidopsis</taxon>
    </lineage>
</organism>
<feature type="signal peptide" evidence="2">
    <location>
        <begin position="1"/>
        <end position="21"/>
    </location>
</feature>
<feature type="chain" id="PRO_0000395467" description="Leucine-rich repeat extensin-like protein 7">
    <location>
        <begin position="22"/>
        <end position="433"/>
    </location>
</feature>
<feature type="repeat" description="LRR 1">
    <location>
        <begin position="98"/>
        <end position="122"/>
    </location>
</feature>
<feature type="repeat" description="LRR 2">
    <location>
        <begin position="123"/>
        <end position="145"/>
    </location>
</feature>
<feature type="repeat" description="LRR 3">
    <location>
        <begin position="146"/>
        <end position="170"/>
    </location>
</feature>
<feature type="repeat" description="LRR 4">
    <location>
        <begin position="171"/>
        <end position="194"/>
    </location>
</feature>
<feature type="repeat" description="LRR 5">
    <location>
        <begin position="196"/>
        <end position="217"/>
    </location>
</feature>
<feature type="repeat" description="LRR 6">
    <location>
        <begin position="219"/>
        <end position="239"/>
    </location>
</feature>
<feature type="repeat" description="LRR 7">
    <location>
        <begin position="241"/>
        <end position="265"/>
    </location>
</feature>
<feature type="repeat" description="LRR 8">
    <location>
        <begin position="266"/>
        <end position="289"/>
    </location>
</feature>
<feature type="repeat" description="LRR 9">
    <location>
        <begin position="290"/>
        <end position="313"/>
    </location>
</feature>
<feature type="region of interest" description="Disordered" evidence="3">
    <location>
        <begin position="380"/>
        <end position="433"/>
    </location>
</feature>
<feature type="region of interest" description="Contains the Ser-Pro(4) repeats">
    <location>
        <begin position="381"/>
        <end position="433"/>
    </location>
</feature>
<feature type="compositionally biased region" description="Pro residues" evidence="3">
    <location>
        <begin position="395"/>
        <end position="427"/>
    </location>
</feature>
<feature type="glycosylation site" description="N-linked (GlcNAc...) asparagine" evidence="2">
    <location>
        <position position="71"/>
    </location>
</feature>
<feature type="glycosylation site" description="N-linked (GlcNAc...) asparagine" evidence="2">
    <location>
        <position position="267"/>
    </location>
</feature>
<feature type="glycosylation site" description="N-linked (GlcNAc...) asparagine" evidence="2">
    <location>
        <position position="340"/>
    </location>
</feature>
<evidence type="ECO:0000250" key="1"/>
<evidence type="ECO:0000255" key="2"/>
<evidence type="ECO:0000256" key="3">
    <source>
        <dbReference type="SAM" id="MobiDB-lite"/>
    </source>
</evidence>
<evidence type="ECO:0000269" key="4">
    <source>
    </source>
</evidence>
<sequence>MRIYQPTLLIFTTVVLLSISAVAPGGSRQLLYTRDDPITIPPYLIFENVRLERAYVALQAWKRAMISDPWNLTTNWFGSRVCDYNGVVCSESLDDPLVKTVSGVDLNQGDIAGHLPEELGLLTDIALFHVNSNRFCGTLPVGFSQLSLLFELDLSNNRFAGKFPEVVIGLPKLKYLDLRYNEFEGELPESLFDKDLDALFLNSNRFRSKIPVNMGNSPVSVLVLASNRFEGCIPPSFGKMGKTLNEIILMDNGLQSCIPNDMGLLQNVTVLDISYNWLVGELPKSMGQMENLEVLNVERNMLSGLIPDELCSLEKLRDFRYGSNYFTGEPATCRYLENYNYTMNCFKDVRDQRSMMECKMFLSKPVDCDSFKCSPGSSCFSPPPSQISPSSQPLAPAPSPTSPPLSTPPPARPCPPVYSPPPPPPLSLAPSMN</sequence>
<name>LRX7_ARATH</name>
<comment type="function">
    <text evidence="1">Modulates cell morphogenesis by regulating cell wall formation and assembly, and/or growth polarization.</text>
</comment>
<comment type="subcellular location">
    <subcellularLocation>
        <location evidence="1">Secreted</location>
        <location evidence="1">Cell wall</location>
    </subcellularLocation>
</comment>
<comment type="tissue specificity">
    <text evidence="4">Expressed in flowers and pollen.</text>
</comment>
<comment type="PTM">
    <text evidence="1">Hydroxylated on proline residues in the S-P-P-P-P repeat.</text>
</comment>
<comment type="PTM">
    <text evidence="1">O-glycosylated on hydroxyprolines.</text>
</comment>
<dbReference type="EMBL" id="AC006601">
    <property type="status" value="NOT_ANNOTATED_CDS"/>
    <property type="molecule type" value="Genomic_DNA"/>
</dbReference>
<dbReference type="EMBL" id="CP002688">
    <property type="protein sequence ID" value="AED93461.1"/>
    <property type="molecule type" value="Genomic_DNA"/>
</dbReference>
<dbReference type="EMBL" id="DQ056690">
    <property type="protein sequence ID" value="AAY78836.1"/>
    <property type="molecule type" value="mRNA"/>
</dbReference>
<dbReference type="RefSeq" id="NP_197937.1">
    <property type="nucleotide sequence ID" value="NM_122466.2"/>
</dbReference>
<dbReference type="SMR" id="Q4PSE6"/>
<dbReference type="FunCoup" id="Q4PSE6">
    <property type="interactions" value="13"/>
</dbReference>
<dbReference type="STRING" id="3702.Q4PSE6"/>
<dbReference type="GlyCosmos" id="Q4PSE6">
    <property type="glycosylation" value="3 sites, No reported glycans"/>
</dbReference>
<dbReference type="GlyGen" id="Q4PSE6">
    <property type="glycosylation" value="5 sites"/>
</dbReference>
<dbReference type="PaxDb" id="3702-AT5G25550.1"/>
<dbReference type="ProteomicsDB" id="238617"/>
<dbReference type="EnsemblPlants" id="AT5G25550.1">
    <property type="protein sequence ID" value="AT5G25550.1"/>
    <property type="gene ID" value="AT5G25550"/>
</dbReference>
<dbReference type="GeneID" id="832630"/>
<dbReference type="Gramene" id="AT5G25550.1">
    <property type="protein sequence ID" value="AT5G25550.1"/>
    <property type="gene ID" value="AT5G25550"/>
</dbReference>
<dbReference type="KEGG" id="ath:AT5G25550"/>
<dbReference type="Araport" id="AT5G25550"/>
<dbReference type="TAIR" id="AT5G25550"/>
<dbReference type="eggNOG" id="ENOG502QQ2D">
    <property type="taxonomic scope" value="Eukaryota"/>
</dbReference>
<dbReference type="HOGENOM" id="CLU_000288_23_1_1"/>
<dbReference type="InParanoid" id="Q4PSE6"/>
<dbReference type="OMA" id="TMECKVF"/>
<dbReference type="PhylomeDB" id="Q4PSE6"/>
<dbReference type="PRO" id="PR:Q4PSE6"/>
<dbReference type="Proteomes" id="UP000006548">
    <property type="component" value="Chromosome 5"/>
</dbReference>
<dbReference type="ExpressionAtlas" id="Q4PSE6">
    <property type="expression patterns" value="baseline and differential"/>
</dbReference>
<dbReference type="GO" id="GO:0005576">
    <property type="term" value="C:extracellular region"/>
    <property type="evidence" value="ECO:0007669"/>
    <property type="project" value="UniProtKB-KW"/>
</dbReference>
<dbReference type="GO" id="GO:0005199">
    <property type="term" value="F:structural constituent of cell wall"/>
    <property type="evidence" value="ECO:0000250"/>
    <property type="project" value="TAIR"/>
</dbReference>
<dbReference type="GO" id="GO:0071555">
    <property type="term" value="P:cell wall organization"/>
    <property type="evidence" value="ECO:0007669"/>
    <property type="project" value="UniProtKB-KW"/>
</dbReference>
<dbReference type="FunFam" id="3.80.10.10:FF:000224">
    <property type="entry name" value="Leucine-rich repeat extensin-like protein 1"/>
    <property type="match status" value="1"/>
</dbReference>
<dbReference type="FunFam" id="3.80.10.10:FF:000631">
    <property type="entry name" value="Leucine-rich repeat extensin-like protein 5"/>
    <property type="match status" value="1"/>
</dbReference>
<dbReference type="Gene3D" id="3.80.10.10">
    <property type="entry name" value="Ribonuclease Inhibitor"/>
    <property type="match status" value="2"/>
</dbReference>
<dbReference type="InterPro" id="IPR001611">
    <property type="entry name" value="Leu-rich_rpt"/>
</dbReference>
<dbReference type="InterPro" id="IPR032675">
    <property type="entry name" value="LRR_dom_sf"/>
</dbReference>
<dbReference type="InterPro" id="IPR051582">
    <property type="entry name" value="LRR_extensin-like_regulator"/>
</dbReference>
<dbReference type="PANTHER" id="PTHR32093">
    <property type="entry name" value="LEUCINE-RICH REPEAT EXTENSIN-LIKE PROTEIN 3-RELATED"/>
    <property type="match status" value="1"/>
</dbReference>
<dbReference type="PANTHER" id="PTHR32093:SF117">
    <property type="entry name" value="LEUCINE-RICH REPEAT EXTENSIN-LIKE PROTEIN 7"/>
    <property type="match status" value="1"/>
</dbReference>
<dbReference type="Pfam" id="PF00560">
    <property type="entry name" value="LRR_1"/>
    <property type="match status" value="3"/>
</dbReference>
<dbReference type="Pfam" id="PF13855">
    <property type="entry name" value="LRR_8"/>
    <property type="match status" value="1"/>
</dbReference>
<dbReference type="SUPFAM" id="SSF52058">
    <property type="entry name" value="L domain-like"/>
    <property type="match status" value="1"/>
</dbReference>
<protein>
    <recommendedName>
        <fullName>Leucine-rich repeat extensin-like protein 7</fullName>
        <shortName>AtLRX7</shortName>
        <shortName>LRR/EXTENSIN7</shortName>
    </recommendedName>
    <alternativeName>
        <fullName>Cell wall hydroxyproline-rich glycoprotein</fullName>
    </alternativeName>
</protein>